<proteinExistence type="inferred from homology"/>
<name>P5CR_CORML</name>
<sequence length="270" mass="28223">MTTIAVIGGGQIGEALVSGLIAANMNPQNIRVTNRSEERGQELRDRYGILNMTDNSQAADEADVVFLCVKPKFIVEVLSEITGTLDNNSAQSVVVSMAAGISIAAMEESASAGLPVVRVMPNTPMLVGKGMSTVTKGRYVDAEQLEQVKDLLSTVGDVLEVAESDIDAVTAMSGSSPAYLFLVTEALIEAGVNLGLPRATAKKLAVASFEGAATMMKETGKEPSELRAGVSSPAGTTVAAIRELEESGIRGAFYRAAQACADRSEELGKH</sequence>
<protein>
    <recommendedName>
        <fullName evidence="1">Pyrroline-5-carboxylate reductase</fullName>
        <shortName evidence="1">P5C reductase</shortName>
        <shortName evidence="1">P5CR</shortName>
        <ecNumber evidence="1">1.5.1.2</ecNumber>
    </recommendedName>
    <alternativeName>
        <fullName evidence="1">PCA reductase</fullName>
    </alternativeName>
</protein>
<comment type="function">
    <text evidence="1">Catalyzes the reduction of 1-pyrroline-5-carboxylate (PCA) to L-proline.</text>
</comment>
<comment type="catalytic activity">
    <reaction evidence="1">
        <text>L-proline + NADP(+) = (S)-1-pyrroline-5-carboxylate + NADPH + 2 H(+)</text>
        <dbReference type="Rhea" id="RHEA:14109"/>
        <dbReference type="ChEBI" id="CHEBI:15378"/>
        <dbReference type="ChEBI" id="CHEBI:17388"/>
        <dbReference type="ChEBI" id="CHEBI:57783"/>
        <dbReference type="ChEBI" id="CHEBI:58349"/>
        <dbReference type="ChEBI" id="CHEBI:60039"/>
        <dbReference type="EC" id="1.5.1.2"/>
    </reaction>
</comment>
<comment type="catalytic activity">
    <reaction evidence="1">
        <text>L-proline + NAD(+) = (S)-1-pyrroline-5-carboxylate + NADH + 2 H(+)</text>
        <dbReference type="Rhea" id="RHEA:14105"/>
        <dbReference type="ChEBI" id="CHEBI:15378"/>
        <dbReference type="ChEBI" id="CHEBI:17388"/>
        <dbReference type="ChEBI" id="CHEBI:57540"/>
        <dbReference type="ChEBI" id="CHEBI:57945"/>
        <dbReference type="ChEBI" id="CHEBI:60039"/>
        <dbReference type="EC" id="1.5.1.2"/>
    </reaction>
</comment>
<comment type="pathway">
    <text evidence="1">Amino-acid biosynthesis; L-proline biosynthesis; L-proline from L-glutamate 5-semialdehyde: step 1/1.</text>
</comment>
<comment type="subcellular location">
    <subcellularLocation>
        <location evidence="1">Cytoplasm</location>
    </subcellularLocation>
</comment>
<comment type="similarity">
    <text evidence="1">Belongs to the pyrroline-5-carboxylate reductase family.</text>
</comment>
<evidence type="ECO:0000255" key="1">
    <source>
        <dbReference type="HAMAP-Rule" id="MF_01925"/>
    </source>
</evidence>
<keyword id="KW-0028">Amino-acid biosynthesis</keyword>
<keyword id="KW-0963">Cytoplasm</keyword>
<keyword id="KW-0521">NADP</keyword>
<keyword id="KW-0560">Oxidoreductase</keyword>
<keyword id="KW-0641">Proline biosynthesis</keyword>
<gene>
    <name evidence="1" type="primary">proC</name>
</gene>
<feature type="chain" id="PRO_0000236038" description="Pyrroline-5-carboxylate reductase">
    <location>
        <begin position="1"/>
        <end position="270"/>
    </location>
</feature>
<dbReference type="EC" id="1.5.1.2" evidence="1"/>
<dbReference type="EMBL" id="U31225">
    <property type="protein sequence ID" value="AAC44172.1"/>
    <property type="molecule type" value="Genomic_DNA"/>
</dbReference>
<dbReference type="SMR" id="P0C1E5"/>
<dbReference type="UniPathway" id="UPA00098">
    <property type="reaction ID" value="UER00361"/>
</dbReference>
<dbReference type="GO" id="GO:0005737">
    <property type="term" value="C:cytoplasm"/>
    <property type="evidence" value="ECO:0007669"/>
    <property type="project" value="UniProtKB-SubCell"/>
</dbReference>
<dbReference type="GO" id="GO:0004735">
    <property type="term" value="F:pyrroline-5-carboxylate reductase activity"/>
    <property type="evidence" value="ECO:0007669"/>
    <property type="project" value="UniProtKB-UniRule"/>
</dbReference>
<dbReference type="GO" id="GO:0055129">
    <property type="term" value="P:L-proline biosynthetic process"/>
    <property type="evidence" value="ECO:0007669"/>
    <property type="project" value="UniProtKB-UniRule"/>
</dbReference>
<dbReference type="FunFam" id="1.10.3730.10:FF:000001">
    <property type="entry name" value="Pyrroline-5-carboxylate reductase"/>
    <property type="match status" value="1"/>
</dbReference>
<dbReference type="FunFam" id="3.40.50.720:FF:000190">
    <property type="entry name" value="Pyrroline-5-carboxylate reductase"/>
    <property type="match status" value="1"/>
</dbReference>
<dbReference type="Gene3D" id="3.40.50.720">
    <property type="entry name" value="NAD(P)-binding Rossmann-like Domain"/>
    <property type="match status" value="1"/>
</dbReference>
<dbReference type="Gene3D" id="1.10.3730.10">
    <property type="entry name" value="ProC C-terminal domain-like"/>
    <property type="match status" value="1"/>
</dbReference>
<dbReference type="HAMAP" id="MF_01925">
    <property type="entry name" value="P5C_reductase"/>
    <property type="match status" value="1"/>
</dbReference>
<dbReference type="InterPro" id="IPR008927">
    <property type="entry name" value="6-PGluconate_DH-like_C_sf"/>
</dbReference>
<dbReference type="InterPro" id="IPR036291">
    <property type="entry name" value="NAD(P)-bd_dom_sf"/>
</dbReference>
<dbReference type="InterPro" id="IPR028939">
    <property type="entry name" value="P5C_Rdtase_cat_N"/>
</dbReference>
<dbReference type="InterPro" id="IPR053790">
    <property type="entry name" value="P5CR-like_CS"/>
</dbReference>
<dbReference type="InterPro" id="IPR029036">
    <property type="entry name" value="P5CR_dimer"/>
</dbReference>
<dbReference type="InterPro" id="IPR000304">
    <property type="entry name" value="Pyrroline-COOH_reductase"/>
</dbReference>
<dbReference type="NCBIfam" id="TIGR00112">
    <property type="entry name" value="proC"/>
    <property type="match status" value="1"/>
</dbReference>
<dbReference type="PANTHER" id="PTHR11645">
    <property type="entry name" value="PYRROLINE-5-CARBOXYLATE REDUCTASE"/>
    <property type="match status" value="1"/>
</dbReference>
<dbReference type="PANTHER" id="PTHR11645:SF0">
    <property type="entry name" value="PYRROLINE-5-CARBOXYLATE REDUCTASE 3"/>
    <property type="match status" value="1"/>
</dbReference>
<dbReference type="Pfam" id="PF03807">
    <property type="entry name" value="F420_oxidored"/>
    <property type="match status" value="1"/>
</dbReference>
<dbReference type="Pfam" id="PF14748">
    <property type="entry name" value="P5CR_dimer"/>
    <property type="match status" value="1"/>
</dbReference>
<dbReference type="PIRSF" id="PIRSF000193">
    <property type="entry name" value="Pyrrol-5-carb_rd"/>
    <property type="match status" value="1"/>
</dbReference>
<dbReference type="SUPFAM" id="SSF48179">
    <property type="entry name" value="6-phosphogluconate dehydrogenase C-terminal domain-like"/>
    <property type="match status" value="1"/>
</dbReference>
<dbReference type="SUPFAM" id="SSF51735">
    <property type="entry name" value="NAD(P)-binding Rossmann-fold domains"/>
    <property type="match status" value="1"/>
</dbReference>
<dbReference type="PROSITE" id="PS00521">
    <property type="entry name" value="P5CR"/>
    <property type="match status" value="1"/>
</dbReference>
<organism>
    <name type="scientific">Corynebacterium melassecola</name>
    <dbReference type="NCBI Taxonomy" id="41643"/>
    <lineage>
        <taxon>Bacteria</taxon>
        <taxon>Bacillati</taxon>
        <taxon>Actinomycetota</taxon>
        <taxon>Actinomycetes</taxon>
        <taxon>Mycobacteriales</taxon>
        <taxon>Corynebacteriaceae</taxon>
        <taxon>Corynebacterium</taxon>
    </lineage>
</organism>
<reference key="1">
    <citation type="journal article" date="1996" name="J. Bacteriol.">
        <title>Mutations in the Corynebacterium glutamicum proline biosynthetic pathway: a natural bypass of the proA step.</title>
        <authorList>
            <person name="Ankri S."/>
            <person name="Serebrijski I."/>
            <person name="Reyes O."/>
            <person name="Leblon G."/>
        </authorList>
    </citation>
    <scope>NUCLEOTIDE SEQUENCE [GENOMIC DNA]</scope>
    <source>
        <strain>ATCC 17965 / AS B-4821</strain>
    </source>
</reference>
<accession>P0C1E5</accession>
<accession>P46540</accession>